<protein>
    <recommendedName>
        <fullName evidence="1">GTPase Obg</fullName>
        <ecNumber evidence="1">3.6.5.-</ecNumber>
    </recommendedName>
    <alternativeName>
        <fullName evidence="1">GTP-binding protein Obg</fullName>
    </alternativeName>
</protein>
<evidence type="ECO:0000255" key="1">
    <source>
        <dbReference type="HAMAP-Rule" id="MF_01454"/>
    </source>
</evidence>
<evidence type="ECO:0000255" key="2">
    <source>
        <dbReference type="PROSITE-ProRule" id="PRU01229"/>
    </source>
</evidence>
<evidence type="ECO:0000255" key="3">
    <source>
        <dbReference type="PROSITE-ProRule" id="PRU01231"/>
    </source>
</evidence>
<evidence type="ECO:0000256" key="4">
    <source>
        <dbReference type="SAM" id="MobiDB-lite"/>
    </source>
</evidence>
<accession>Q65GM7</accession>
<accession>Q62S35</accession>
<gene>
    <name evidence="1" type="primary">obg</name>
    <name type="ordered locus">BLi02919</name>
    <name type="ordered locus">BL01159</name>
</gene>
<keyword id="KW-0963">Cytoplasm</keyword>
<keyword id="KW-0342">GTP-binding</keyword>
<keyword id="KW-0378">Hydrolase</keyword>
<keyword id="KW-0460">Magnesium</keyword>
<keyword id="KW-0479">Metal-binding</keyword>
<keyword id="KW-0547">Nucleotide-binding</keyword>
<keyword id="KW-1185">Reference proteome</keyword>
<reference key="1">
    <citation type="journal article" date="2004" name="J. Mol. Microbiol. Biotechnol.">
        <title>The complete genome sequence of Bacillus licheniformis DSM13, an organism with great industrial potential.</title>
        <authorList>
            <person name="Veith B."/>
            <person name="Herzberg C."/>
            <person name="Steckel S."/>
            <person name="Feesche J."/>
            <person name="Maurer K.H."/>
            <person name="Ehrenreich P."/>
            <person name="Baeumer S."/>
            <person name="Henne A."/>
            <person name="Liesegang H."/>
            <person name="Merkl R."/>
            <person name="Ehrenreich A."/>
            <person name="Gottschalk G."/>
        </authorList>
    </citation>
    <scope>NUCLEOTIDE SEQUENCE [LARGE SCALE GENOMIC DNA]</scope>
    <source>
        <strain>ATCC 14580 / DSM 13 / JCM 2505 / CCUG 7422 / NBRC 12200 / NCIMB 9375 / NCTC 10341 / NRRL NRS-1264 / Gibson 46</strain>
    </source>
</reference>
<reference key="2">
    <citation type="journal article" date="2004" name="Genome Biol.">
        <title>Complete genome sequence of the industrial bacterium Bacillus licheniformis and comparisons with closely related Bacillus species.</title>
        <authorList>
            <person name="Rey M.W."/>
            <person name="Ramaiya P."/>
            <person name="Nelson B.A."/>
            <person name="Brody-Karpin S.D."/>
            <person name="Zaretsky E.J."/>
            <person name="Tang M."/>
            <person name="Lopez de Leon A."/>
            <person name="Xiang H."/>
            <person name="Gusti V."/>
            <person name="Clausen I.G."/>
            <person name="Olsen P.B."/>
            <person name="Rasmussen M.D."/>
            <person name="Andersen J.T."/>
            <person name="Joergensen P.L."/>
            <person name="Larsen T.S."/>
            <person name="Sorokin A."/>
            <person name="Bolotin A."/>
            <person name="Lapidus A."/>
            <person name="Galleron N."/>
            <person name="Ehrlich S.D."/>
            <person name="Berka R.M."/>
        </authorList>
    </citation>
    <scope>NUCLEOTIDE SEQUENCE [LARGE SCALE GENOMIC DNA]</scope>
    <source>
        <strain>ATCC 14580 / DSM 13 / JCM 2505 / CCUG 7422 / NBRC 12200 / NCIMB 9375 / NCTC 10341 / NRRL NRS-1264 / Gibson 46</strain>
    </source>
</reference>
<sequence length="428" mass="47574">MFVDQVKIYVKGGDGGNGMVAFRREKYVPKGGPAGGDGGKGGDVVFKVDEGLSTLMDFRYQRHFKAARGEHGMSKNQHGRNAEDMVVKVPPGTVVIDDDTKQVIADLTEHGQEAVIAKGGRGGRGNTRFATPANPAPQLSENGEPGKERYIVLELKVLADVGLVGFPSVGKSTLLSVVSSAKPKIADYHFTTLNPNLGMVETEDGRSFVMADLPGLIEGAHEGVGLGHQFLRHIERTRVIVHVIDMSGLEGRDPYEDYVTINKELEQYNLRLTERPQIIVANKMDMPDAEENLKAFKEKLTDDYPVFPISAVTRQGLRDLLFEIADRLETTPEFPLYDEEDMAENRVMYKLEDEEAPFEISRDPDGTFVLSGAKLERLFKMTDFSRDESVKRFARQLRGMGVDDALRARGAKDGDTIRLLEFEFEFID</sequence>
<name>OBG_BACLD</name>
<feature type="chain" id="PRO_0000385726" description="GTPase Obg">
    <location>
        <begin position="1"/>
        <end position="428"/>
    </location>
</feature>
<feature type="domain" description="Obg" evidence="3">
    <location>
        <begin position="1"/>
        <end position="158"/>
    </location>
</feature>
<feature type="domain" description="OBG-type G" evidence="1">
    <location>
        <begin position="159"/>
        <end position="329"/>
    </location>
</feature>
<feature type="domain" description="OCT" evidence="2">
    <location>
        <begin position="350"/>
        <end position="428"/>
    </location>
</feature>
<feature type="region of interest" description="Disordered" evidence="4">
    <location>
        <begin position="118"/>
        <end position="143"/>
    </location>
</feature>
<feature type="binding site" evidence="1">
    <location>
        <begin position="165"/>
        <end position="172"/>
    </location>
    <ligand>
        <name>GTP</name>
        <dbReference type="ChEBI" id="CHEBI:37565"/>
    </ligand>
</feature>
<feature type="binding site" evidence="1">
    <location>
        <position position="172"/>
    </location>
    <ligand>
        <name>Mg(2+)</name>
        <dbReference type="ChEBI" id="CHEBI:18420"/>
    </ligand>
</feature>
<feature type="binding site" evidence="1">
    <location>
        <begin position="190"/>
        <end position="194"/>
    </location>
    <ligand>
        <name>GTP</name>
        <dbReference type="ChEBI" id="CHEBI:37565"/>
    </ligand>
</feature>
<feature type="binding site" evidence="1">
    <location>
        <position position="192"/>
    </location>
    <ligand>
        <name>Mg(2+)</name>
        <dbReference type="ChEBI" id="CHEBI:18420"/>
    </ligand>
</feature>
<feature type="binding site" evidence="1">
    <location>
        <begin position="212"/>
        <end position="215"/>
    </location>
    <ligand>
        <name>GTP</name>
        <dbReference type="ChEBI" id="CHEBI:37565"/>
    </ligand>
</feature>
<feature type="binding site" evidence="1">
    <location>
        <begin position="282"/>
        <end position="285"/>
    </location>
    <ligand>
        <name>GTP</name>
        <dbReference type="ChEBI" id="CHEBI:37565"/>
    </ligand>
</feature>
<feature type="binding site" evidence="1">
    <location>
        <begin position="310"/>
        <end position="312"/>
    </location>
    <ligand>
        <name>GTP</name>
        <dbReference type="ChEBI" id="CHEBI:37565"/>
    </ligand>
</feature>
<dbReference type="EC" id="3.6.5.-" evidence="1"/>
<dbReference type="EMBL" id="CP000002">
    <property type="protein sequence ID" value="AAU24425.1"/>
    <property type="molecule type" value="Genomic_DNA"/>
</dbReference>
<dbReference type="EMBL" id="AE017333">
    <property type="protein sequence ID" value="AAU41787.1"/>
    <property type="molecule type" value="Genomic_DNA"/>
</dbReference>
<dbReference type="SMR" id="Q65GM7"/>
<dbReference type="STRING" id="279010.BL01159"/>
<dbReference type="KEGG" id="bld:BLi02919"/>
<dbReference type="KEGG" id="bli:BL01159"/>
<dbReference type="eggNOG" id="COG0536">
    <property type="taxonomic scope" value="Bacteria"/>
</dbReference>
<dbReference type="HOGENOM" id="CLU_011747_2_1_9"/>
<dbReference type="Proteomes" id="UP000000606">
    <property type="component" value="Chromosome"/>
</dbReference>
<dbReference type="GO" id="GO:0005737">
    <property type="term" value="C:cytoplasm"/>
    <property type="evidence" value="ECO:0007669"/>
    <property type="project" value="UniProtKB-SubCell"/>
</dbReference>
<dbReference type="GO" id="GO:0005525">
    <property type="term" value="F:GTP binding"/>
    <property type="evidence" value="ECO:0007669"/>
    <property type="project" value="UniProtKB-UniRule"/>
</dbReference>
<dbReference type="GO" id="GO:0003924">
    <property type="term" value="F:GTPase activity"/>
    <property type="evidence" value="ECO:0007669"/>
    <property type="project" value="UniProtKB-UniRule"/>
</dbReference>
<dbReference type="GO" id="GO:0000287">
    <property type="term" value="F:magnesium ion binding"/>
    <property type="evidence" value="ECO:0007669"/>
    <property type="project" value="InterPro"/>
</dbReference>
<dbReference type="GO" id="GO:0042254">
    <property type="term" value="P:ribosome biogenesis"/>
    <property type="evidence" value="ECO:0007669"/>
    <property type="project" value="UniProtKB-UniRule"/>
</dbReference>
<dbReference type="CDD" id="cd01898">
    <property type="entry name" value="Obg"/>
    <property type="match status" value="1"/>
</dbReference>
<dbReference type="FunFam" id="2.70.210.12:FF:000001">
    <property type="entry name" value="GTPase Obg"/>
    <property type="match status" value="1"/>
</dbReference>
<dbReference type="FunFam" id="3.40.50.300:FF:000515">
    <property type="entry name" value="GTPase Obg"/>
    <property type="match status" value="1"/>
</dbReference>
<dbReference type="Gene3D" id="3.30.300.350">
    <property type="entry name" value="GTP-binding protein OBG, C-terminal domain"/>
    <property type="match status" value="1"/>
</dbReference>
<dbReference type="Gene3D" id="2.70.210.12">
    <property type="entry name" value="GTP1/OBG domain"/>
    <property type="match status" value="1"/>
</dbReference>
<dbReference type="Gene3D" id="3.40.50.300">
    <property type="entry name" value="P-loop containing nucleotide triphosphate hydrolases"/>
    <property type="match status" value="1"/>
</dbReference>
<dbReference type="HAMAP" id="MF_01454">
    <property type="entry name" value="GTPase_Obg"/>
    <property type="match status" value="1"/>
</dbReference>
<dbReference type="InterPro" id="IPR031167">
    <property type="entry name" value="G_OBG"/>
</dbReference>
<dbReference type="InterPro" id="IPR006073">
    <property type="entry name" value="GTP-bd"/>
</dbReference>
<dbReference type="InterPro" id="IPR014100">
    <property type="entry name" value="GTP-bd_Obg/CgtA"/>
</dbReference>
<dbReference type="InterPro" id="IPR036346">
    <property type="entry name" value="GTP-bd_prot_GTP1/OBG_C_sf"/>
</dbReference>
<dbReference type="InterPro" id="IPR006074">
    <property type="entry name" value="GTP1-OBG_CS"/>
</dbReference>
<dbReference type="InterPro" id="IPR006169">
    <property type="entry name" value="GTP1_OBG_dom"/>
</dbReference>
<dbReference type="InterPro" id="IPR036726">
    <property type="entry name" value="GTP1_OBG_dom_sf"/>
</dbReference>
<dbReference type="InterPro" id="IPR045086">
    <property type="entry name" value="OBG_GTPase"/>
</dbReference>
<dbReference type="InterPro" id="IPR015349">
    <property type="entry name" value="OCT_dom"/>
</dbReference>
<dbReference type="InterPro" id="IPR027417">
    <property type="entry name" value="P-loop_NTPase"/>
</dbReference>
<dbReference type="InterPro" id="IPR005225">
    <property type="entry name" value="Small_GTP-bd"/>
</dbReference>
<dbReference type="NCBIfam" id="TIGR02729">
    <property type="entry name" value="Obg_CgtA"/>
    <property type="match status" value="1"/>
</dbReference>
<dbReference type="NCBIfam" id="TIGR03595">
    <property type="entry name" value="Obg_CgtA_exten"/>
    <property type="match status" value="1"/>
</dbReference>
<dbReference type="NCBIfam" id="NF008954">
    <property type="entry name" value="PRK12296.1"/>
    <property type="match status" value="1"/>
</dbReference>
<dbReference type="NCBIfam" id="NF008955">
    <property type="entry name" value="PRK12297.1"/>
    <property type="match status" value="1"/>
</dbReference>
<dbReference type="NCBIfam" id="NF008956">
    <property type="entry name" value="PRK12299.1"/>
    <property type="match status" value="1"/>
</dbReference>
<dbReference type="NCBIfam" id="TIGR00231">
    <property type="entry name" value="small_GTP"/>
    <property type="match status" value="1"/>
</dbReference>
<dbReference type="PANTHER" id="PTHR11702">
    <property type="entry name" value="DEVELOPMENTALLY REGULATED GTP-BINDING PROTEIN-RELATED"/>
    <property type="match status" value="1"/>
</dbReference>
<dbReference type="PANTHER" id="PTHR11702:SF31">
    <property type="entry name" value="MITOCHONDRIAL RIBOSOME-ASSOCIATED GTPASE 2"/>
    <property type="match status" value="1"/>
</dbReference>
<dbReference type="Pfam" id="PF09269">
    <property type="entry name" value="DUF1967"/>
    <property type="match status" value="1"/>
</dbReference>
<dbReference type="Pfam" id="PF01018">
    <property type="entry name" value="GTP1_OBG"/>
    <property type="match status" value="1"/>
</dbReference>
<dbReference type="Pfam" id="PF01926">
    <property type="entry name" value="MMR_HSR1"/>
    <property type="match status" value="1"/>
</dbReference>
<dbReference type="PIRSF" id="PIRSF002401">
    <property type="entry name" value="GTP_bd_Obg/CgtA"/>
    <property type="match status" value="1"/>
</dbReference>
<dbReference type="PRINTS" id="PR00326">
    <property type="entry name" value="GTP1OBG"/>
</dbReference>
<dbReference type="SUPFAM" id="SSF102741">
    <property type="entry name" value="Obg GTP-binding protein C-terminal domain"/>
    <property type="match status" value="1"/>
</dbReference>
<dbReference type="SUPFAM" id="SSF82051">
    <property type="entry name" value="Obg GTP-binding protein N-terminal domain"/>
    <property type="match status" value="1"/>
</dbReference>
<dbReference type="SUPFAM" id="SSF52540">
    <property type="entry name" value="P-loop containing nucleoside triphosphate hydrolases"/>
    <property type="match status" value="1"/>
</dbReference>
<dbReference type="PROSITE" id="PS51710">
    <property type="entry name" value="G_OBG"/>
    <property type="match status" value="1"/>
</dbReference>
<dbReference type="PROSITE" id="PS00905">
    <property type="entry name" value="GTP1_OBG"/>
    <property type="match status" value="1"/>
</dbReference>
<dbReference type="PROSITE" id="PS51883">
    <property type="entry name" value="OBG"/>
    <property type="match status" value="1"/>
</dbReference>
<dbReference type="PROSITE" id="PS51881">
    <property type="entry name" value="OCT"/>
    <property type="match status" value="1"/>
</dbReference>
<comment type="function">
    <text evidence="1">An essential GTPase which binds GTP, GDP and possibly (p)ppGpp with moderate affinity, with high nucleotide exchange rates and a fairly low GTP hydrolysis rate. Plays a role in control of the cell cycle, stress response, ribosome biogenesis and in those bacteria that undergo differentiation, in morphogenesis control.</text>
</comment>
<comment type="cofactor">
    <cofactor evidence="1">
        <name>Mg(2+)</name>
        <dbReference type="ChEBI" id="CHEBI:18420"/>
    </cofactor>
</comment>
<comment type="subunit">
    <text evidence="1">Monomer.</text>
</comment>
<comment type="subcellular location">
    <subcellularLocation>
        <location evidence="1">Cytoplasm</location>
    </subcellularLocation>
</comment>
<comment type="similarity">
    <text evidence="1">Belongs to the TRAFAC class OBG-HflX-like GTPase superfamily. OBG GTPase family.</text>
</comment>
<proteinExistence type="inferred from homology"/>
<organism>
    <name type="scientific">Bacillus licheniformis (strain ATCC 14580 / DSM 13 / JCM 2505 / CCUG 7422 / NBRC 12200 / NCIMB 9375 / NCTC 10341 / NRRL NRS-1264 / Gibson 46)</name>
    <dbReference type="NCBI Taxonomy" id="279010"/>
    <lineage>
        <taxon>Bacteria</taxon>
        <taxon>Bacillati</taxon>
        <taxon>Bacillota</taxon>
        <taxon>Bacilli</taxon>
        <taxon>Bacillales</taxon>
        <taxon>Bacillaceae</taxon>
        <taxon>Bacillus</taxon>
    </lineage>
</organism>